<name>THIO_STAAN</name>
<sequence>MAIVKVTDADFDSKVESGVQLVDFWATWCGPCKMIAPVLEELAADYEGKADILKLDVDENPSTAAKYEVMSIPTLIVFKDGQPVDKVVGFQPKENLAEVLDKHL</sequence>
<feature type="chain" id="PRO_0000120127" description="Thioredoxin">
    <location>
        <begin position="1"/>
        <end position="104"/>
    </location>
</feature>
<feature type="domain" description="Thioredoxin" evidence="2">
    <location>
        <begin position="2"/>
        <end position="104"/>
    </location>
</feature>
<feature type="disulfide bond" description="Redox-active" evidence="2">
    <location>
        <begin position="29"/>
        <end position="32"/>
    </location>
</feature>
<proteinExistence type="evidence at protein level"/>
<gene>
    <name type="primary">trxA</name>
    <name type="ordered locus">SA0992</name>
</gene>
<accession>P99122</accession>
<accession>Q9ZEH4</accession>
<dbReference type="EMBL" id="BA000018">
    <property type="protein sequence ID" value="BAB42241.1"/>
    <property type="molecule type" value="Genomic_DNA"/>
</dbReference>
<dbReference type="PIR" id="E89885">
    <property type="entry name" value="E89885"/>
</dbReference>
<dbReference type="RefSeq" id="WP_001018928.1">
    <property type="nucleotide sequence ID" value="NC_002745.2"/>
</dbReference>
<dbReference type="SMR" id="P99122"/>
<dbReference type="EnsemblBacteria" id="BAB42241">
    <property type="protein sequence ID" value="BAB42241"/>
    <property type="gene ID" value="BAB42241"/>
</dbReference>
<dbReference type="GeneID" id="98345462"/>
<dbReference type="KEGG" id="sau:SA0992"/>
<dbReference type="HOGENOM" id="CLU_090389_10_2_9"/>
<dbReference type="GO" id="GO:0005829">
    <property type="term" value="C:cytosol"/>
    <property type="evidence" value="ECO:0007669"/>
    <property type="project" value="TreeGrafter"/>
</dbReference>
<dbReference type="GO" id="GO:0015035">
    <property type="term" value="F:protein-disulfide reductase activity"/>
    <property type="evidence" value="ECO:0007669"/>
    <property type="project" value="InterPro"/>
</dbReference>
<dbReference type="GO" id="GO:0045454">
    <property type="term" value="P:cell redox homeostasis"/>
    <property type="evidence" value="ECO:0007669"/>
    <property type="project" value="TreeGrafter"/>
</dbReference>
<dbReference type="CDD" id="cd02947">
    <property type="entry name" value="TRX_family"/>
    <property type="match status" value="1"/>
</dbReference>
<dbReference type="FunFam" id="3.40.30.10:FF:000001">
    <property type="entry name" value="Thioredoxin"/>
    <property type="match status" value="1"/>
</dbReference>
<dbReference type="Gene3D" id="3.40.30.10">
    <property type="entry name" value="Glutaredoxin"/>
    <property type="match status" value="1"/>
</dbReference>
<dbReference type="InterPro" id="IPR005746">
    <property type="entry name" value="Thioredoxin"/>
</dbReference>
<dbReference type="InterPro" id="IPR036249">
    <property type="entry name" value="Thioredoxin-like_sf"/>
</dbReference>
<dbReference type="InterPro" id="IPR017937">
    <property type="entry name" value="Thioredoxin_CS"/>
</dbReference>
<dbReference type="InterPro" id="IPR013766">
    <property type="entry name" value="Thioredoxin_domain"/>
</dbReference>
<dbReference type="NCBIfam" id="TIGR01068">
    <property type="entry name" value="thioredoxin"/>
    <property type="match status" value="1"/>
</dbReference>
<dbReference type="PANTHER" id="PTHR45663">
    <property type="entry name" value="GEO12009P1"/>
    <property type="match status" value="1"/>
</dbReference>
<dbReference type="PANTHER" id="PTHR45663:SF11">
    <property type="entry name" value="GEO12009P1"/>
    <property type="match status" value="1"/>
</dbReference>
<dbReference type="Pfam" id="PF00085">
    <property type="entry name" value="Thioredoxin"/>
    <property type="match status" value="1"/>
</dbReference>
<dbReference type="PIRSF" id="PIRSF000077">
    <property type="entry name" value="Thioredoxin"/>
    <property type="match status" value="1"/>
</dbReference>
<dbReference type="PRINTS" id="PR00421">
    <property type="entry name" value="THIOREDOXIN"/>
</dbReference>
<dbReference type="SUPFAM" id="SSF52833">
    <property type="entry name" value="Thioredoxin-like"/>
    <property type="match status" value="1"/>
</dbReference>
<dbReference type="PROSITE" id="PS00194">
    <property type="entry name" value="THIOREDOXIN_1"/>
    <property type="match status" value="1"/>
</dbReference>
<dbReference type="PROSITE" id="PS51352">
    <property type="entry name" value="THIOREDOXIN_2"/>
    <property type="match status" value="1"/>
</dbReference>
<evidence type="ECO:0000250" key="1"/>
<evidence type="ECO:0000255" key="2">
    <source>
        <dbReference type="PROSITE-ProRule" id="PRU00691"/>
    </source>
</evidence>
<evidence type="ECO:0000305" key="3"/>
<comment type="function">
    <text evidence="1">Component of the thioredoxin-thioredoxin reductase system. Participates in various redox reactions through the reversible oxidation of its active center dithiol to a disulfide and catalyzes dithiol-disulfide exchange reactions (By similarity).</text>
</comment>
<comment type="similarity">
    <text evidence="3">Belongs to the thioredoxin family.</text>
</comment>
<reference key="1">
    <citation type="journal article" date="2001" name="Lancet">
        <title>Whole genome sequencing of meticillin-resistant Staphylococcus aureus.</title>
        <authorList>
            <person name="Kuroda M."/>
            <person name="Ohta T."/>
            <person name="Uchiyama I."/>
            <person name="Baba T."/>
            <person name="Yuzawa H."/>
            <person name="Kobayashi I."/>
            <person name="Cui L."/>
            <person name="Oguchi A."/>
            <person name="Aoki K."/>
            <person name="Nagai Y."/>
            <person name="Lian J.-Q."/>
            <person name="Ito T."/>
            <person name="Kanamori M."/>
            <person name="Matsumaru H."/>
            <person name="Maruyama A."/>
            <person name="Murakami H."/>
            <person name="Hosoyama A."/>
            <person name="Mizutani-Ui Y."/>
            <person name="Takahashi N.K."/>
            <person name="Sawano T."/>
            <person name="Inoue R."/>
            <person name="Kaito C."/>
            <person name="Sekimizu K."/>
            <person name="Hirakawa H."/>
            <person name="Kuhara S."/>
            <person name="Goto S."/>
            <person name="Yabuzaki J."/>
            <person name="Kanehisa M."/>
            <person name="Yamashita A."/>
            <person name="Oshima K."/>
            <person name="Furuya K."/>
            <person name="Yoshino C."/>
            <person name="Shiba T."/>
            <person name="Hattori M."/>
            <person name="Ogasawara N."/>
            <person name="Hayashi H."/>
            <person name="Hiramatsu K."/>
        </authorList>
    </citation>
    <scope>NUCLEOTIDE SEQUENCE [LARGE SCALE GENOMIC DNA]</scope>
    <source>
        <strain>N315</strain>
    </source>
</reference>
<reference key="2">
    <citation type="journal article" date="2005" name="J. Microbiol. Methods">
        <title>Correlation of proteomic and transcriptomic profiles of Staphylococcus aureus during the post-exponential phase of growth.</title>
        <authorList>
            <person name="Scherl A."/>
            <person name="Francois P."/>
            <person name="Bento M."/>
            <person name="Deshusses J.M."/>
            <person name="Charbonnier Y."/>
            <person name="Converset V."/>
            <person name="Huyghe A."/>
            <person name="Walter N."/>
            <person name="Hoogland C."/>
            <person name="Appel R.D."/>
            <person name="Sanchez J.-C."/>
            <person name="Zimmermann-Ivol C.G."/>
            <person name="Corthals G.L."/>
            <person name="Hochstrasser D.F."/>
            <person name="Schrenzel J."/>
        </authorList>
    </citation>
    <scope>IDENTIFICATION BY MASS SPECTROMETRY</scope>
    <source>
        <strain>N315</strain>
    </source>
</reference>
<reference key="3">
    <citation type="submission" date="2007-10" db="UniProtKB">
        <title>Shotgun proteomic analysis of total and membrane protein extracts of S. aureus strain N315.</title>
        <authorList>
            <person name="Vaezzadeh A.R."/>
            <person name="Deshusses J."/>
            <person name="Lescuyer P."/>
            <person name="Hochstrasser D.F."/>
        </authorList>
    </citation>
    <scope>IDENTIFICATION BY MASS SPECTROMETRY [LARGE SCALE ANALYSIS]</scope>
    <source>
        <strain>N315</strain>
    </source>
</reference>
<protein>
    <recommendedName>
        <fullName>Thioredoxin</fullName>
        <shortName>Trx</shortName>
    </recommendedName>
</protein>
<keyword id="KW-1015">Disulfide bond</keyword>
<keyword id="KW-0249">Electron transport</keyword>
<keyword id="KW-0676">Redox-active center</keyword>
<keyword id="KW-0813">Transport</keyword>
<organism>
    <name type="scientific">Staphylococcus aureus (strain N315)</name>
    <dbReference type="NCBI Taxonomy" id="158879"/>
    <lineage>
        <taxon>Bacteria</taxon>
        <taxon>Bacillati</taxon>
        <taxon>Bacillota</taxon>
        <taxon>Bacilli</taxon>
        <taxon>Bacillales</taxon>
        <taxon>Staphylococcaceae</taxon>
        <taxon>Staphylococcus</taxon>
    </lineage>
</organism>